<proteinExistence type="inferred from homology"/>
<reference key="1">
    <citation type="journal article" date="2009" name="Proc. Natl. Acad. Sci. U.S.A.">
        <title>Biogeography of the Sulfolobus islandicus pan-genome.</title>
        <authorList>
            <person name="Reno M.L."/>
            <person name="Held N.L."/>
            <person name="Fields C.J."/>
            <person name="Burke P.V."/>
            <person name="Whitaker R.J."/>
        </authorList>
    </citation>
    <scope>NUCLEOTIDE SEQUENCE [LARGE SCALE GENOMIC DNA]</scope>
    <source>
        <strain>M.16.27</strain>
    </source>
</reference>
<evidence type="ECO:0000255" key="1">
    <source>
        <dbReference type="HAMAP-Rule" id="MF_00122"/>
    </source>
</evidence>
<evidence type="ECO:0000256" key="2">
    <source>
        <dbReference type="SAM" id="MobiDB-lite"/>
    </source>
</evidence>
<feature type="chain" id="PRO_1000203080" description="Aspartyl/glutamyl-tRNA(Asn/Gln) amidotransferase subunit C">
    <location>
        <begin position="1"/>
        <end position="97"/>
    </location>
</feature>
<feature type="region of interest" description="Disordered" evidence="2">
    <location>
        <begin position="58"/>
        <end position="78"/>
    </location>
</feature>
<feature type="compositionally biased region" description="Basic and acidic residues" evidence="2">
    <location>
        <begin position="63"/>
        <end position="77"/>
    </location>
</feature>
<gene>
    <name evidence="1" type="primary">gatC</name>
    <name type="ordered locus">M1627_1318</name>
</gene>
<organism>
    <name type="scientific">Saccharolobus islandicus (strain M.16.27)</name>
    <name type="common">Sulfolobus islandicus</name>
    <dbReference type="NCBI Taxonomy" id="427318"/>
    <lineage>
        <taxon>Archaea</taxon>
        <taxon>Thermoproteota</taxon>
        <taxon>Thermoprotei</taxon>
        <taxon>Sulfolobales</taxon>
        <taxon>Sulfolobaceae</taxon>
        <taxon>Saccharolobus</taxon>
    </lineage>
</organism>
<dbReference type="EC" id="6.3.5.-" evidence="1"/>
<dbReference type="EMBL" id="CP001401">
    <property type="protein sequence ID" value="ACP55201.1"/>
    <property type="molecule type" value="Genomic_DNA"/>
</dbReference>
<dbReference type="RefSeq" id="WP_012711275.1">
    <property type="nucleotide sequence ID" value="NC_012632.1"/>
</dbReference>
<dbReference type="SMR" id="C3N5C6"/>
<dbReference type="GeneID" id="84061583"/>
<dbReference type="KEGG" id="sim:M1627_1318"/>
<dbReference type="HOGENOM" id="CLU_105899_4_1_2"/>
<dbReference type="Proteomes" id="UP000002307">
    <property type="component" value="Chromosome"/>
</dbReference>
<dbReference type="GO" id="GO:0050566">
    <property type="term" value="F:asparaginyl-tRNA synthase (glutamine-hydrolyzing) activity"/>
    <property type="evidence" value="ECO:0007669"/>
    <property type="project" value="RHEA"/>
</dbReference>
<dbReference type="GO" id="GO:0005524">
    <property type="term" value="F:ATP binding"/>
    <property type="evidence" value="ECO:0007669"/>
    <property type="project" value="UniProtKB-KW"/>
</dbReference>
<dbReference type="GO" id="GO:0050567">
    <property type="term" value="F:glutaminyl-tRNA synthase (glutamine-hydrolyzing) activity"/>
    <property type="evidence" value="ECO:0007669"/>
    <property type="project" value="UniProtKB-UniRule"/>
</dbReference>
<dbReference type="GO" id="GO:0070681">
    <property type="term" value="P:glutaminyl-tRNAGln biosynthesis via transamidation"/>
    <property type="evidence" value="ECO:0007669"/>
    <property type="project" value="TreeGrafter"/>
</dbReference>
<dbReference type="GO" id="GO:0006450">
    <property type="term" value="P:regulation of translational fidelity"/>
    <property type="evidence" value="ECO:0007669"/>
    <property type="project" value="InterPro"/>
</dbReference>
<dbReference type="GO" id="GO:0006412">
    <property type="term" value="P:translation"/>
    <property type="evidence" value="ECO:0007669"/>
    <property type="project" value="UniProtKB-UniRule"/>
</dbReference>
<dbReference type="Gene3D" id="1.10.20.60">
    <property type="entry name" value="Glu-tRNAGln amidotransferase C subunit, N-terminal domain"/>
    <property type="match status" value="1"/>
</dbReference>
<dbReference type="HAMAP" id="MF_00122">
    <property type="entry name" value="GatC"/>
    <property type="match status" value="1"/>
</dbReference>
<dbReference type="InterPro" id="IPR036113">
    <property type="entry name" value="Asp/Glu-ADT_sf_sub_c"/>
</dbReference>
<dbReference type="InterPro" id="IPR003837">
    <property type="entry name" value="GatC"/>
</dbReference>
<dbReference type="NCBIfam" id="TIGR00135">
    <property type="entry name" value="gatC"/>
    <property type="match status" value="1"/>
</dbReference>
<dbReference type="NCBIfam" id="NF000684">
    <property type="entry name" value="PRK00034.3-4"/>
    <property type="match status" value="1"/>
</dbReference>
<dbReference type="PANTHER" id="PTHR15004">
    <property type="entry name" value="GLUTAMYL-TRNA(GLN) AMIDOTRANSFERASE SUBUNIT C, MITOCHONDRIAL"/>
    <property type="match status" value="1"/>
</dbReference>
<dbReference type="PANTHER" id="PTHR15004:SF0">
    <property type="entry name" value="GLUTAMYL-TRNA(GLN) AMIDOTRANSFERASE SUBUNIT C, MITOCHONDRIAL"/>
    <property type="match status" value="1"/>
</dbReference>
<dbReference type="Pfam" id="PF02686">
    <property type="entry name" value="GatC"/>
    <property type="match status" value="1"/>
</dbReference>
<dbReference type="SUPFAM" id="SSF141000">
    <property type="entry name" value="Glu-tRNAGln amidotransferase C subunit"/>
    <property type="match status" value="1"/>
</dbReference>
<comment type="function">
    <text evidence="1">Allows the formation of correctly charged Asn-tRNA(Asn) or Gln-tRNA(Gln) through the transamidation of misacylated Asp-tRNA(Asn) or Glu-tRNA(Gln) in organisms which lack either or both of asparaginyl-tRNA or glutaminyl-tRNA synthetases. The reaction takes place in the presence of glutamine and ATP through an activated phospho-Asp-tRNA(Asn) or phospho-Glu-tRNA(Gln).</text>
</comment>
<comment type="catalytic activity">
    <reaction evidence="1">
        <text>L-glutamyl-tRNA(Gln) + L-glutamine + ATP + H2O = L-glutaminyl-tRNA(Gln) + L-glutamate + ADP + phosphate + H(+)</text>
        <dbReference type="Rhea" id="RHEA:17521"/>
        <dbReference type="Rhea" id="RHEA-COMP:9681"/>
        <dbReference type="Rhea" id="RHEA-COMP:9684"/>
        <dbReference type="ChEBI" id="CHEBI:15377"/>
        <dbReference type="ChEBI" id="CHEBI:15378"/>
        <dbReference type="ChEBI" id="CHEBI:29985"/>
        <dbReference type="ChEBI" id="CHEBI:30616"/>
        <dbReference type="ChEBI" id="CHEBI:43474"/>
        <dbReference type="ChEBI" id="CHEBI:58359"/>
        <dbReference type="ChEBI" id="CHEBI:78520"/>
        <dbReference type="ChEBI" id="CHEBI:78521"/>
        <dbReference type="ChEBI" id="CHEBI:456216"/>
    </reaction>
</comment>
<comment type="catalytic activity">
    <reaction evidence="1">
        <text>L-aspartyl-tRNA(Asn) + L-glutamine + ATP + H2O = L-asparaginyl-tRNA(Asn) + L-glutamate + ADP + phosphate + 2 H(+)</text>
        <dbReference type="Rhea" id="RHEA:14513"/>
        <dbReference type="Rhea" id="RHEA-COMP:9674"/>
        <dbReference type="Rhea" id="RHEA-COMP:9677"/>
        <dbReference type="ChEBI" id="CHEBI:15377"/>
        <dbReference type="ChEBI" id="CHEBI:15378"/>
        <dbReference type="ChEBI" id="CHEBI:29985"/>
        <dbReference type="ChEBI" id="CHEBI:30616"/>
        <dbReference type="ChEBI" id="CHEBI:43474"/>
        <dbReference type="ChEBI" id="CHEBI:58359"/>
        <dbReference type="ChEBI" id="CHEBI:78515"/>
        <dbReference type="ChEBI" id="CHEBI:78516"/>
        <dbReference type="ChEBI" id="CHEBI:456216"/>
    </reaction>
</comment>
<comment type="subunit">
    <text evidence="1">Heterotrimer of A, B and C subunits.</text>
</comment>
<comment type="similarity">
    <text evidence="1">Belongs to the GatC family.</text>
</comment>
<sequence>MKIEVNKNLIKHLENLSLIQLSQNEEKMLENDITNIIKFFEKINELDLSNVEPLFHPLPQGRLRKDTPRDPLDRENALKNVKRKENGYIVGPRTYGE</sequence>
<keyword id="KW-0067">ATP-binding</keyword>
<keyword id="KW-0436">Ligase</keyword>
<keyword id="KW-0547">Nucleotide-binding</keyword>
<keyword id="KW-0648">Protein biosynthesis</keyword>
<protein>
    <recommendedName>
        <fullName evidence="1">Aspartyl/glutamyl-tRNA(Asn/Gln) amidotransferase subunit C</fullName>
        <shortName evidence="1">Asp/Glu-ADT subunit C</shortName>
        <ecNumber evidence="1">6.3.5.-</ecNumber>
    </recommendedName>
</protein>
<accession>C3N5C6</accession>
<name>GATC_SACI3</name>